<evidence type="ECO:0000255" key="1">
    <source>
        <dbReference type="HAMAP-Rule" id="MF_01342"/>
    </source>
</evidence>
<evidence type="ECO:0000305" key="2"/>
<name>RL16_THEVB</name>
<organism>
    <name type="scientific">Thermosynechococcus vestitus (strain NIES-2133 / IAM M-273 / BP-1)</name>
    <dbReference type="NCBI Taxonomy" id="197221"/>
    <lineage>
        <taxon>Bacteria</taxon>
        <taxon>Bacillati</taxon>
        <taxon>Cyanobacteriota</taxon>
        <taxon>Cyanophyceae</taxon>
        <taxon>Acaryochloridales</taxon>
        <taxon>Thermosynechococcaceae</taxon>
        <taxon>Thermosynechococcus</taxon>
    </lineage>
</organism>
<keyword id="KW-1185">Reference proteome</keyword>
<keyword id="KW-0687">Ribonucleoprotein</keyword>
<keyword id="KW-0689">Ribosomal protein</keyword>
<keyword id="KW-0694">RNA-binding</keyword>
<keyword id="KW-0699">rRNA-binding</keyword>
<keyword id="KW-0820">tRNA-binding</keyword>
<reference key="1">
    <citation type="journal article" date="2002" name="DNA Res.">
        <title>Complete genome structure of the thermophilic cyanobacterium Thermosynechococcus elongatus BP-1.</title>
        <authorList>
            <person name="Nakamura Y."/>
            <person name="Kaneko T."/>
            <person name="Sato S."/>
            <person name="Ikeuchi M."/>
            <person name="Katoh H."/>
            <person name="Sasamoto S."/>
            <person name="Watanabe A."/>
            <person name="Iriguchi M."/>
            <person name="Kawashima K."/>
            <person name="Kimura T."/>
            <person name="Kishida Y."/>
            <person name="Kiyokawa C."/>
            <person name="Kohara M."/>
            <person name="Matsumoto M."/>
            <person name="Matsuno A."/>
            <person name="Nakazaki N."/>
            <person name="Shimpo S."/>
            <person name="Sugimoto M."/>
            <person name="Takeuchi C."/>
            <person name="Yamada M."/>
            <person name="Tabata S."/>
        </authorList>
    </citation>
    <scope>NUCLEOTIDE SEQUENCE [LARGE SCALE GENOMIC DNA]</scope>
    <source>
        <strain>NIES-2133 / IAM M-273 / BP-1</strain>
    </source>
</reference>
<dbReference type="EMBL" id="BA000039">
    <property type="protein sequence ID" value="BAC07641.1"/>
    <property type="molecule type" value="Genomic_DNA"/>
</dbReference>
<dbReference type="RefSeq" id="NP_680879.1">
    <property type="nucleotide sequence ID" value="NC_004113.1"/>
</dbReference>
<dbReference type="RefSeq" id="WP_011055943.1">
    <property type="nucleotide sequence ID" value="NC_004113.1"/>
</dbReference>
<dbReference type="SMR" id="Q8DMM5"/>
<dbReference type="STRING" id="197221.gene:10746666"/>
<dbReference type="EnsemblBacteria" id="BAC07641">
    <property type="protein sequence ID" value="BAC07641"/>
    <property type="gene ID" value="BAC07641"/>
</dbReference>
<dbReference type="KEGG" id="tel:tlr0088"/>
<dbReference type="PATRIC" id="fig|197221.4.peg.91"/>
<dbReference type="eggNOG" id="COG0197">
    <property type="taxonomic scope" value="Bacteria"/>
</dbReference>
<dbReference type="Proteomes" id="UP000000440">
    <property type="component" value="Chromosome"/>
</dbReference>
<dbReference type="GO" id="GO:0022625">
    <property type="term" value="C:cytosolic large ribosomal subunit"/>
    <property type="evidence" value="ECO:0007669"/>
    <property type="project" value="TreeGrafter"/>
</dbReference>
<dbReference type="GO" id="GO:0019843">
    <property type="term" value="F:rRNA binding"/>
    <property type="evidence" value="ECO:0007669"/>
    <property type="project" value="UniProtKB-UniRule"/>
</dbReference>
<dbReference type="GO" id="GO:0003735">
    <property type="term" value="F:structural constituent of ribosome"/>
    <property type="evidence" value="ECO:0007669"/>
    <property type="project" value="InterPro"/>
</dbReference>
<dbReference type="GO" id="GO:0000049">
    <property type="term" value="F:tRNA binding"/>
    <property type="evidence" value="ECO:0007669"/>
    <property type="project" value="UniProtKB-KW"/>
</dbReference>
<dbReference type="GO" id="GO:0006412">
    <property type="term" value="P:translation"/>
    <property type="evidence" value="ECO:0007669"/>
    <property type="project" value="UniProtKB-UniRule"/>
</dbReference>
<dbReference type="CDD" id="cd01433">
    <property type="entry name" value="Ribosomal_L16_L10e"/>
    <property type="match status" value="1"/>
</dbReference>
<dbReference type="FunFam" id="3.90.1170.10:FF:000001">
    <property type="entry name" value="50S ribosomal protein L16"/>
    <property type="match status" value="1"/>
</dbReference>
<dbReference type="Gene3D" id="3.90.1170.10">
    <property type="entry name" value="Ribosomal protein L10e/L16"/>
    <property type="match status" value="1"/>
</dbReference>
<dbReference type="HAMAP" id="MF_01342">
    <property type="entry name" value="Ribosomal_uL16"/>
    <property type="match status" value="1"/>
</dbReference>
<dbReference type="InterPro" id="IPR047873">
    <property type="entry name" value="Ribosomal_uL16"/>
</dbReference>
<dbReference type="InterPro" id="IPR000114">
    <property type="entry name" value="Ribosomal_uL16_bact-type"/>
</dbReference>
<dbReference type="InterPro" id="IPR020798">
    <property type="entry name" value="Ribosomal_uL16_CS"/>
</dbReference>
<dbReference type="InterPro" id="IPR016180">
    <property type="entry name" value="Ribosomal_uL16_dom"/>
</dbReference>
<dbReference type="InterPro" id="IPR036920">
    <property type="entry name" value="Ribosomal_uL16_sf"/>
</dbReference>
<dbReference type="NCBIfam" id="TIGR01164">
    <property type="entry name" value="rplP_bact"/>
    <property type="match status" value="1"/>
</dbReference>
<dbReference type="PANTHER" id="PTHR12220">
    <property type="entry name" value="50S/60S RIBOSOMAL PROTEIN L16"/>
    <property type="match status" value="1"/>
</dbReference>
<dbReference type="PANTHER" id="PTHR12220:SF13">
    <property type="entry name" value="LARGE RIBOSOMAL SUBUNIT PROTEIN UL16M"/>
    <property type="match status" value="1"/>
</dbReference>
<dbReference type="Pfam" id="PF00252">
    <property type="entry name" value="Ribosomal_L16"/>
    <property type="match status" value="1"/>
</dbReference>
<dbReference type="PRINTS" id="PR00060">
    <property type="entry name" value="RIBOSOMALL16"/>
</dbReference>
<dbReference type="SUPFAM" id="SSF54686">
    <property type="entry name" value="Ribosomal protein L16p/L10e"/>
    <property type="match status" value="1"/>
</dbReference>
<dbReference type="PROSITE" id="PS00586">
    <property type="entry name" value="RIBOSOMAL_L16_1"/>
    <property type="match status" value="1"/>
</dbReference>
<dbReference type="PROSITE" id="PS00701">
    <property type="entry name" value="RIBOSOMAL_L16_2"/>
    <property type="match status" value="1"/>
</dbReference>
<protein>
    <recommendedName>
        <fullName evidence="1">Large ribosomal subunit protein uL16</fullName>
    </recommendedName>
    <alternativeName>
        <fullName evidence="2">50S ribosomal protein L16</fullName>
    </alternativeName>
</protein>
<sequence>MLSPKRTKFRKQQRGRMTGVASRGNSIHFGDYALQALEPAWITARQIEAGRRAMTRYIRRGGKIWIRIFPDKPVTMRPAETRMGSGKGSPEYWVAVVKPGRIMYEIAGVTEEVAREAMRLAAYKMPIKTRFLVRNQEEQQQEG</sequence>
<accession>Q8DMM5</accession>
<comment type="function">
    <text evidence="1">Binds 23S rRNA and is also seen to make contacts with the A and possibly P site tRNAs.</text>
</comment>
<comment type="subunit">
    <text evidence="1">Part of the 50S ribosomal subunit.</text>
</comment>
<comment type="similarity">
    <text evidence="1">Belongs to the universal ribosomal protein uL16 family.</text>
</comment>
<proteinExistence type="inferred from homology"/>
<feature type="chain" id="PRO_0000062229" description="Large ribosomal subunit protein uL16">
    <location>
        <begin position="1"/>
        <end position="143"/>
    </location>
</feature>
<gene>
    <name evidence="1" type="primary">rplP</name>
    <name evidence="1" type="synonym">rpl16</name>
    <name type="ordered locus">tlr0088</name>
</gene>